<proteinExistence type="evidence at transcript level"/>
<comment type="function">
    <text evidence="1 2">Dual specificity glycosyltransferase that catalyzes the transfer of glucose and xylose from UDP-glucose and UDP-xylose, respectively, to a serine residue found in the consensus sequence of C-X-S-X-P-C. Specifically targets extracellular EGF repeats of protein such as CRB2, F7, F9 and NOTCH2 (By similarity). Acts as a positive regulator of Notch signaling by mediating O-glucosylation of Notch, leading to regulate muscle development (By similarity). Notch glucosylation does not affect Notch ligand binding (By similarity). Required during early development to promote gastrulation: acts by mediating O-glucosylation of CRB2, which is required for CRB2 localization to the cell membrane (By similarity).</text>
</comment>
<comment type="catalytic activity">
    <reaction evidence="2">
        <text>L-seryl-[EGF-like domain protein] + UDP-alpha-D-xylose = 3-O-(beta-D-xylosyl)-L-seryl-[EGF-like domain protein] + UDP + H(+)</text>
        <dbReference type="Rhea" id="RHEA:62016"/>
        <dbReference type="Rhea" id="RHEA-COMP:16010"/>
        <dbReference type="Rhea" id="RHEA-COMP:16011"/>
        <dbReference type="ChEBI" id="CHEBI:15378"/>
        <dbReference type="ChEBI" id="CHEBI:29999"/>
        <dbReference type="ChEBI" id="CHEBI:57632"/>
        <dbReference type="ChEBI" id="CHEBI:58223"/>
        <dbReference type="ChEBI" id="CHEBI:132085"/>
        <dbReference type="EC" id="2.4.2.63"/>
    </reaction>
</comment>
<comment type="catalytic activity">
    <reaction evidence="2">
        <text>L-seryl-[EGF-like domain protein] + UDP-alpha-D-glucose = 3-O-(beta-D-glucosyl)-L-seryl-[EGF-like domain protein] + UDP + H(+)</text>
        <dbReference type="Rhea" id="RHEA:58116"/>
        <dbReference type="Rhea" id="RHEA-COMP:14610"/>
        <dbReference type="Rhea" id="RHEA-COMP:16010"/>
        <dbReference type="ChEBI" id="CHEBI:15378"/>
        <dbReference type="ChEBI" id="CHEBI:29999"/>
        <dbReference type="ChEBI" id="CHEBI:58223"/>
        <dbReference type="ChEBI" id="CHEBI:58885"/>
        <dbReference type="ChEBI" id="CHEBI:140576"/>
        <dbReference type="EC" id="2.4.1.376"/>
    </reaction>
</comment>
<comment type="pathway">
    <text evidence="1">Protein modification; protein glycosylation.</text>
</comment>
<comment type="subcellular location">
    <subcellularLocation>
        <location evidence="2">Endoplasmic reticulum lumen</location>
    </subcellularLocation>
</comment>
<comment type="similarity">
    <text evidence="6">Belongs to the glycosyltransferase 90 family.</text>
</comment>
<evidence type="ECO:0000250" key="1">
    <source>
        <dbReference type="UniProtKB" id="Q8BYB9"/>
    </source>
</evidence>
<evidence type="ECO:0000250" key="2">
    <source>
        <dbReference type="UniProtKB" id="Q8NBL1"/>
    </source>
</evidence>
<evidence type="ECO:0000250" key="3">
    <source>
        <dbReference type="UniProtKB" id="Q8T045"/>
    </source>
</evidence>
<evidence type="ECO:0000255" key="4"/>
<evidence type="ECO:0000255" key="5">
    <source>
        <dbReference type="PROSITE-ProRule" id="PRU10138"/>
    </source>
</evidence>
<evidence type="ECO:0000305" key="6"/>
<protein>
    <recommendedName>
        <fullName>Protein O-glucosyltransferase 1</fullName>
        <ecNumber evidence="2">2.4.1.376</ecNumber>
    </recommendedName>
    <alternativeName>
        <fullName>CAP10-like 46 kDa protein</fullName>
    </alternativeName>
    <alternativeName>
        <fullName>KTEL motif-containing protein 1</fullName>
    </alternativeName>
    <alternativeName>
        <fullName>O-glucosyltransferase Rumi homolog</fullName>
        <shortName>Rumi</shortName>
    </alternativeName>
    <alternativeName>
        <fullName>Protein O-xylosyltransferase</fullName>
        <ecNumber evidence="2">2.4.2.63</ecNumber>
    </alternativeName>
</protein>
<feature type="signal peptide" evidence="4">
    <location>
        <begin position="1"/>
        <end position="23"/>
    </location>
</feature>
<feature type="chain" id="PRO_0000246684" description="Protein O-glucosyltransferase 1">
    <location>
        <begin position="24"/>
        <end position="392"/>
    </location>
</feature>
<feature type="region of interest" description="Interaction with the consensus sequence C-X-S-X-[PA]-C in peptide substrates" evidence="2">
    <location>
        <begin position="103"/>
        <end position="107"/>
    </location>
</feature>
<feature type="region of interest" description="Interaction with the consensus sequence C-X-S-X-[PA]-C in peptide substrates" evidence="2">
    <location>
        <begin position="172"/>
        <end position="178"/>
    </location>
</feature>
<feature type="short sequence motif" description="Prevents secretion from ER" evidence="5">
    <location>
        <begin position="389"/>
        <end position="392"/>
    </location>
</feature>
<feature type="active site" description="Proton donor/acceptor" evidence="3">
    <location>
        <position position="133"/>
    </location>
</feature>
<feature type="binding site" evidence="2">
    <location>
        <position position="177"/>
    </location>
    <ligand>
        <name>UDP-alpha-D-glucose</name>
        <dbReference type="ChEBI" id="CHEBI:58885"/>
    </ligand>
</feature>
<feature type="binding site" evidence="2">
    <location>
        <position position="212"/>
    </location>
    <ligand>
        <name>UDP-alpha-D-glucose</name>
        <dbReference type="ChEBI" id="CHEBI:58885"/>
    </ligand>
</feature>
<feature type="binding site" evidence="2">
    <location>
        <position position="218"/>
    </location>
    <ligand>
        <name>UDP-alpha-D-glucose</name>
        <dbReference type="ChEBI" id="CHEBI:58885"/>
    </ligand>
</feature>
<feature type="binding site" evidence="2">
    <location>
        <begin position="274"/>
        <end position="279"/>
    </location>
    <ligand>
        <name>UDP-alpha-D-glucose</name>
        <dbReference type="ChEBI" id="CHEBI:58885"/>
    </ligand>
</feature>
<feature type="site" description="Interaction with the consensus sequence C-X-S-X-[PA]-C in peptide substrates" evidence="2">
    <location>
        <position position="132"/>
    </location>
</feature>
<feature type="site" description="Interaction with the consensus sequence C-X-S-X-[PA]-C in peptide substrates" evidence="2">
    <location>
        <position position="240"/>
    </location>
</feature>
<feature type="glycosylation site" description="N-linked (GlcNAc...) asparagine" evidence="4">
    <location>
        <position position="53"/>
    </location>
</feature>
<feature type="glycosylation site" description="N-linked (GlcNAc...) asparagine" evidence="4">
    <location>
        <position position="204"/>
    </location>
</feature>
<feature type="glycosylation site" description="N-linked (GlcNAc...) asparagine" evidence="4">
    <location>
        <position position="373"/>
    </location>
</feature>
<feature type="disulfide bond" evidence="2">
    <location>
        <begin position="49"/>
        <end position="56"/>
    </location>
</feature>
<feature type="disulfide bond" evidence="2">
    <location>
        <begin position="54"/>
        <end position="357"/>
    </location>
</feature>
<feature type="disulfide bond" evidence="2">
    <location>
        <begin position="102"/>
        <end position="108"/>
    </location>
</feature>
<feature type="disulfide bond" evidence="2">
    <location>
        <begin position="263"/>
        <end position="286"/>
    </location>
</feature>
<sequence>MELGVSSQLWLWLLLLLLPPVPGREKESGSKWKVFIDQINRALENYEPCSSPNCSCYHGVIEEDLTPFRGGISRKMMAEVVRRKLGTHYQIIKNRLYRESDCMFPSRCSGVEHFILEVIGRLPDMEMVINVRDYPQVPKWMEPAIPIFSFSKTLEYHDIMYPAWTFWEGGPAVWPIYPMGLGRWDLFREDLVRSAAQWPWKKKNSTAYFRGSRTSPERDPLILLSRKNPKLVDAEYTKNQAWKSMKDTLGKPAAKDVHLVDHCKYKYLFNFRGVAASFRFKHLFLCGSLVFHVGDEWLEFFYPQLKPWVHYIPVKTDLSNVQELLQFVKANDDVAQEIAERGSQFILNHLKMDDITCYWENLLTEYSKFLSYNVTRRKGYDQIVPKILKIEL</sequence>
<dbReference type="EC" id="2.4.1.376" evidence="2"/>
<dbReference type="EC" id="2.4.2.63" evidence="2"/>
<dbReference type="EMBL" id="BT020869">
    <property type="protein sequence ID" value="AAX08886.1"/>
    <property type="molecule type" value="mRNA"/>
</dbReference>
<dbReference type="RefSeq" id="NP_001014903.1">
    <property type="nucleotide sequence ID" value="NM_001014903.1"/>
</dbReference>
<dbReference type="SMR" id="Q5E9Q1"/>
<dbReference type="FunCoup" id="Q5E9Q1">
    <property type="interactions" value="3059"/>
</dbReference>
<dbReference type="STRING" id="9913.ENSBTAP00000011287"/>
<dbReference type="CAZy" id="GT90">
    <property type="family name" value="Glycosyltransferase Family 90"/>
</dbReference>
<dbReference type="GlyCosmos" id="Q5E9Q1">
    <property type="glycosylation" value="3 sites, No reported glycans"/>
</dbReference>
<dbReference type="GlyGen" id="Q5E9Q1">
    <property type="glycosylation" value="3 sites"/>
</dbReference>
<dbReference type="PaxDb" id="9913-ENSBTAP00000011287"/>
<dbReference type="Ensembl" id="ENSBTAT00000011287.4">
    <property type="protein sequence ID" value="ENSBTAP00000011287.3"/>
    <property type="gene ID" value="ENSBTAG00000008562.4"/>
</dbReference>
<dbReference type="GeneID" id="511862"/>
<dbReference type="KEGG" id="bta:511862"/>
<dbReference type="CTD" id="56983"/>
<dbReference type="VEuPathDB" id="HostDB:ENSBTAG00000008562"/>
<dbReference type="VGNC" id="VGNC:33108">
    <property type="gene designation" value="POGLUT1"/>
</dbReference>
<dbReference type="eggNOG" id="KOG2458">
    <property type="taxonomic scope" value="Eukaryota"/>
</dbReference>
<dbReference type="GeneTree" id="ENSGT00940000158283"/>
<dbReference type="HOGENOM" id="CLU_041919_1_0_1"/>
<dbReference type="InParanoid" id="Q5E9Q1"/>
<dbReference type="OMA" id="EDDCMFP"/>
<dbReference type="OrthoDB" id="202415at2759"/>
<dbReference type="TreeFam" id="TF323280"/>
<dbReference type="UniPathway" id="UPA00378"/>
<dbReference type="Proteomes" id="UP000009136">
    <property type="component" value="Chromosome 1"/>
</dbReference>
<dbReference type="Bgee" id="ENSBTAG00000008562">
    <property type="expression patterns" value="Expressed in cumulus cell and 108 other cell types or tissues"/>
</dbReference>
<dbReference type="GO" id="GO:0012505">
    <property type="term" value="C:endomembrane system"/>
    <property type="evidence" value="ECO:0000318"/>
    <property type="project" value="GO_Central"/>
</dbReference>
<dbReference type="GO" id="GO:0005788">
    <property type="term" value="C:endoplasmic reticulum lumen"/>
    <property type="evidence" value="ECO:0000250"/>
    <property type="project" value="UniProtKB"/>
</dbReference>
<dbReference type="GO" id="GO:0140561">
    <property type="term" value="F:EGF-domain serine glucosyltransferase activity"/>
    <property type="evidence" value="ECO:0007669"/>
    <property type="project" value="UniProtKB-EC"/>
</dbReference>
<dbReference type="GO" id="GO:0140562">
    <property type="term" value="F:EGF-domain serine xylosyltransferase activity"/>
    <property type="evidence" value="ECO:0007669"/>
    <property type="project" value="UniProtKB-EC"/>
</dbReference>
<dbReference type="GO" id="GO:0035251">
    <property type="term" value="F:UDP-glucosyltransferase activity"/>
    <property type="evidence" value="ECO:0000250"/>
    <property type="project" value="UniProtKB"/>
</dbReference>
<dbReference type="GO" id="GO:0035252">
    <property type="term" value="F:UDP-xylosyltransferase activity"/>
    <property type="evidence" value="ECO:0000250"/>
    <property type="project" value="UniProtKB"/>
</dbReference>
<dbReference type="GO" id="GO:0048318">
    <property type="term" value="P:axial mesoderm development"/>
    <property type="evidence" value="ECO:0007669"/>
    <property type="project" value="Ensembl"/>
</dbReference>
<dbReference type="GO" id="GO:0072359">
    <property type="term" value="P:circulatory system development"/>
    <property type="evidence" value="ECO:0007669"/>
    <property type="project" value="Ensembl"/>
</dbReference>
<dbReference type="GO" id="GO:0007369">
    <property type="term" value="P:gastrulation"/>
    <property type="evidence" value="ECO:0007669"/>
    <property type="project" value="UniProtKB-KW"/>
</dbReference>
<dbReference type="GO" id="GO:0060537">
    <property type="term" value="P:muscle tissue development"/>
    <property type="evidence" value="ECO:0000250"/>
    <property type="project" value="UniProtKB"/>
</dbReference>
<dbReference type="GO" id="GO:0048339">
    <property type="term" value="P:paraxial mesoderm development"/>
    <property type="evidence" value="ECO:0007669"/>
    <property type="project" value="Ensembl"/>
</dbReference>
<dbReference type="GO" id="GO:0045747">
    <property type="term" value="P:positive regulation of Notch signaling pathway"/>
    <property type="evidence" value="ECO:0000250"/>
    <property type="project" value="UniProtKB"/>
</dbReference>
<dbReference type="GO" id="GO:0006493">
    <property type="term" value="P:protein O-linked glycosylation"/>
    <property type="evidence" value="ECO:0000318"/>
    <property type="project" value="GO_Central"/>
</dbReference>
<dbReference type="GO" id="GO:0018242">
    <property type="term" value="P:protein O-linked glycosylation via serine"/>
    <property type="evidence" value="ECO:0000250"/>
    <property type="project" value="UniProtKB"/>
</dbReference>
<dbReference type="GO" id="GO:0010470">
    <property type="term" value="P:regulation of gastrulation"/>
    <property type="evidence" value="ECO:0000250"/>
    <property type="project" value="UniProtKB"/>
</dbReference>
<dbReference type="GO" id="GO:0001756">
    <property type="term" value="P:somitogenesis"/>
    <property type="evidence" value="ECO:0007669"/>
    <property type="project" value="Ensembl"/>
</dbReference>
<dbReference type="InterPro" id="IPR006598">
    <property type="entry name" value="CAP10"/>
</dbReference>
<dbReference type="InterPro" id="IPR051091">
    <property type="entry name" value="O-Glucosyltr/Glycosyltrsf_90"/>
</dbReference>
<dbReference type="PANTHER" id="PTHR12203">
    <property type="entry name" value="KDEL LYS-ASP-GLU-LEU CONTAINING - RELATED"/>
    <property type="match status" value="1"/>
</dbReference>
<dbReference type="PANTHER" id="PTHR12203:SF35">
    <property type="entry name" value="PROTEIN O-GLUCOSYLTRANSFERASE 1"/>
    <property type="match status" value="1"/>
</dbReference>
<dbReference type="Pfam" id="PF05686">
    <property type="entry name" value="Glyco_transf_90"/>
    <property type="match status" value="1"/>
</dbReference>
<dbReference type="SMART" id="SM00672">
    <property type="entry name" value="CAP10"/>
    <property type="match status" value="1"/>
</dbReference>
<reference key="1">
    <citation type="journal article" date="2005" name="BMC Genomics">
        <title>Characterization of 954 bovine full-CDS cDNA sequences.</title>
        <authorList>
            <person name="Harhay G.P."/>
            <person name="Sonstegard T.S."/>
            <person name="Keele J.W."/>
            <person name="Heaton M.P."/>
            <person name="Clawson M.L."/>
            <person name="Snelling W.M."/>
            <person name="Wiedmann R.T."/>
            <person name="Van Tassell C.P."/>
            <person name="Smith T.P.L."/>
        </authorList>
    </citation>
    <scope>NUCLEOTIDE SEQUENCE [LARGE SCALE MRNA]</scope>
</reference>
<gene>
    <name type="primary">POGLUT1</name>
    <name type="synonym">CLP46</name>
    <name type="synonym">KTELC1</name>
</gene>
<keyword id="KW-0217">Developmental protein</keyword>
<keyword id="KW-1015">Disulfide bond</keyword>
<keyword id="KW-0256">Endoplasmic reticulum</keyword>
<keyword id="KW-0306">Gastrulation</keyword>
<keyword id="KW-0325">Glycoprotein</keyword>
<keyword id="KW-0328">Glycosyltransferase</keyword>
<keyword id="KW-1185">Reference proteome</keyword>
<keyword id="KW-0732">Signal</keyword>
<keyword id="KW-0808">Transferase</keyword>
<organism>
    <name type="scientific">Bos taurus</name>
    <name type="common">Bovine</name>
    <dbReference type="NCBI Taxonomy" id="9913"/>
    <lineage>
        <taxon>Eukaryota</taxon>
        <taxon>Metazoa</taxon>
        <taxon>Chordata</taxon>
        <taxon>Craniata</taxon>
        <taxon>Vertebrata</taxon>
        <taxon>Euteleostomi</taxon>
        <taxon>Mammalia</taxon>
        <taxon>Eutheria</taxon>
        <taxon>Laurasiatheria</taxon>
        <taxon>Artiodactyla</taxon>
        <taxon>Ruminantia</taxon>
        <taxon>Pecora</taxon>
        <taxon>Bovidae</taxon>
        <taxon>Bovinae</taxon>
        <taxon>Bos</taxon>
    </lineage>
</organism>
<name>PGLT1_BOVIN</name>
<accession>Q5E9Q1</accession>